<protein>
    <recommendedName>
        <fullName evidence="8">FCS-Like Zinc finger 1</fullName>
    </recommendedName>
</protein>
<feature type="chain" id="PRO_0000445492" description="FCS-Like Zinc finger 1">
    <location>
        <begin position="1"/>
        <end position="177"/>
    </location>
</feature>
<feature type="zinc finger region" description="FLZ-type" evidence="1">
    <location>
        <begin position="96"/>
        <end position="140"/>
    </location>
</feature>
<feature type="region of interest" description="Disordered" evidence="2">
    <location>
        <begin position="22"/>
        <end position="49"/>
    </location>
</feature>
<feature type="region of interest" description="Disordered" evidence="2">
    <location>
        <begin position="134"/>
        <end position="177"/>
    </location>
</feature>
<feature type="compositionally biased region" description="Low complexity" evidence="2">
    <location>
        <begin position="22"/>
        <end position="46"/>
    </location>
</feature>
<feature type="compositionally biased region" description="Basic and acidic residues" evidence="2">
    <location>
        <begin position="134"/>
        <end position="143"/>
    </location>
</feature>
<feature type="compositionally biased region" description="Basic and acidic residues" evidence="2">
    <location>
        <begin position="154"/>
        <end position="168"/>
    </location>
</feature>
<feature type="sequence conflict" description="In Ref. 4; BX841728." evidence="9" ref="4">
    <original>M</original>
    <variation>I</variation>
    <location>
        <position position="26"/>
    </location>
</feature>
<proteinExistence type="evidence at protein level"/>
<accession>Q9FGQ9</accession>
<accession>A0A178U8H3</accession>
<reference key="1">
    <citation type="submission" date="1999-04" db="EMBL/GenBank/DDBJ databases">
        <title>Structural analysis of Arabidopsis thaliana chromosome 5. XI.</title>
        <authorList>
            <person name="Kaneko T."/>
            <person name="Katoh T."/>
            <person name="Asamizu E."/>
            <person name="Sato S."/>
            <person name="Nakamura Y."/>
            <person name="Kotani H."/>
            <person name="Tabata S."/>
        </authorList>
    </citation>
    <scope>NUCLEOTIDE SEQUENCE [LARGE SCALE GENOMIC DNA]</scope>
    <source>
        <strain>cv. Columbia</strain>
    </source>
</reference>
<reference key="2">
    <citation type="journal article" date="1998" name="DNA Res.">
        <title>Structural analysis of Arabidopsis thaliana chromosome 5. VI. Sequence features of the regions of 1,367,185 bp covered by 19 physically assigned P1 and TAC clones.</title>
        <authorList>
            <person name="Kotani H."/>
            <person name="Nakamura Y."/>
            <person name="Sato S."/>
            <person name="Asamizu E."/>
            <person name="Kaneko T."/>
            <person name="Miyajima N."/>
            <person name="Tabata S."/>
        </authorList>
    </citation>
    <scope>NUCLEOTIDE SEQUENCE [LARGE SCALE GENOMIC DNA]</scope>
    <source>
        <strain>cv. Columbia</strain>
    </source>
</reference>
<reference key="3">
    <citation type="journal article" date="2017" name="Plant J.">
        <title>Araport11: a complete reannotation of the Arabidopsis thaliana reference genome.</title>
        <authorList>
            <person name="Cheng C.Y."/>
            <person name="Krishnakumar V."/>
            <person name="Chan A.P."/>
            <person name="Thibaud-Nissen F."/>
            <person name="Schobel S."/>
            <person name="Town C.D."/>
        </authorList>
    </citation>
    <scope>GENOME REANNOTATION</scope>
    <source>
        <strain>cv. Columbia</strain>
    </source>
</reference>
<reference key="4">
    <citation type="journal article" date="2004" name="Genome Res.">
        <title>Whole genome sequence comparisons and 'full-length' cDNA sequences: a combined approach to evaluate and improve Arabidopsis genome annotation.</title>
        <authorList>
            <person name="Castelli V."/>
            <person name="Aury J.-M."/>
            <person name="Jaillon O."/>
            <person name="Wincker P."/>
            <person name="Clepet C."/>
            <person name="Menard M."/>
            <person name="Cruaud C."/>
            <person name="Quetier F."/>
            <person name="Scarpelli C."/>
            <person name="Schaechter V."/>
            <person name="Temple G."/>
            <person name="Caboche M."/>
            <person name="Weissenbach J."/>
            <person name="Salanoubat M."/>
        </authorList>
    </citation>
    <scope>NUCLEOTIDE SEQUENCE [LARGE SCALE MRNA]</scope>
    <source>
        <strain>cv. Columbia</strain>
    </source>
</reference>
<reference key="5">
    <citation type="submission" date="2006-07" db="EMBL/GenBank/DDBJ databases">
        <title>Large-scale analysis of RIKEN Arabidopsis full-length (RAFL) cDNAs.</title>
        <authorList>
            <person name="Totoki Y."/>
            <person name="Seki M."/>
            <person name="Ishida J."/>
            <person name="Nakajima M."/>
            <person name="Enju A."/>
            <person name="Kamiya A."/>
            <person name="Narusaka M."/>
            <person name="Shin-i T."/>
            <person name="Nakagawa M."/>
            <person name="Sakamoto N."/>
            <person name="Oishi K."/>
            <person name="Kohara Y."/>
            <person name="Kobayashi M."/>
            <person name="Toyoda A."/>
            <person name="Sakaki Y."/>
            <person name="Sakurai T."/>
            <person name="Iida K."/>
            <person name="Akiyama K."/>
            <person name="Satou M."/>
            <person name="Toyoda T."/>
            <person name="Konagaya A."/>
            <person name="Carninci P."/>
            <person name="Kawai J."/>
            <person name="Hayashizaki Y."/>
            <person name="Shinozaki K."/>
        </authorList>
    </citation>
    <scope>NUCLEOTIDE SEQUENCE [LARGE SCALE MRNA]</scope>
    <source>
        <strain>cv. Columbia</strain>
    </source>
</reference>
<reference key="6">
    <citation type="journal article" date="2014" name="Front. Plant Sci.">
        <title>The complex becomes more complex: protein-protein interactions of SnRK1 with DUF581 family proteins provide a framework for cell- and stimulus type-specific SnRK1 signaling in plants.</title>
        <authorList>
            <person name="Nietzsche M."/>
            <person name="Schiessl I."/>
            <person name="Boernke F."/>
        </authorList>
    </citation>
    <scope>GENE FAMILY</scope>
    <scope>INTERACTION WITH KIN10 AND KIN11</scope>
    <scope>FUNCTION</scope>
</reference>
<reference key="7">
    <citation type="journal article" date="2014" name="Front. Plant Sci.">
        <title>Corrigendum: The complex becomes more complex: protein-protein interactions of SnRK1 with DUF581 family proteins provide a framework for cell- and stimulus type-specific SnRK1 signaling in plants.</title>
        <authorList>
            <person name="Boernke F."/>
        </authorList>
    </citation>
    <scope>ERRATUM OF PUBMED:24600465</scope>
</reference>
<reference key="8">
    <citation type="journal article" date="2014" name="PLoS ONE">
        <title>DUF581 is plant specific FCS-like zinc finger involved in protein-protein interaction.</title>
        <authorList>
            <person name="Jamsheer K M."/>
            <person name="Laxmi A."/>
        </authorList>
    </citation>
    <scope>GENE FAMILY</scope>
    <scope>NOMENCLATURE</scope>
    <scope>INTERACTION WITH DSP3 AND BBX21</scope>
    <scope>SUBCELLULAR LOCATION</scope>
</reference>
<reference key="9">
    <citation type="journal article" date="2015" name="Front. Plant Sci.">
        <title>Expression of Arabidopsis FCS-Like Zinc finger genes is differentially regulated by sugars, cellular energy level, and abiotic stress.</title>
        <authorList>
            <person name="Jamsheer K M."/>
            <person name="Laxmi A."/>
        </authorList>
    </citation>
    <scope>INDUCTION</scope>
</reference>
<reference key="10">
    <citation type="journal article" date="2018" name="J. Biol. Chem.">
        <title>The FCS-like zinc finger scaffold of the kinase SnRK1 is formed by the coordinated actions of the FLZ domain and intrinsically disordered regions.</title>
        <authorList>
            <person name="Jamsheer K M."/>
            <person name="Shukla B.N."/>
            <person name="Jindal S."/>
            <person name="Gopan N."/>
            <person name="Mannully C.T."/>
            <person name="Laxmi A."/>
        </authorList>
    </citation>
    <scope>INTERACTION WITH KIN10; KIN11; KINB1; KINB2 AND KINB3</scope>
    <scope>SUBUNIT</scope>
</reference>
<organism>
    <name type="scientific">Arabidopsis thaliana</name>
    <name type="common">Mouse-ear cress</name>
    <dbReference type="NCBI Taxonomy" id="3702"/>
    <lineage>
        <taxon>Eukaryota</taxon>
        <taxon>Viridiplantae</taxon>
        <taxon>Streptophyta</taxon>
        <taxon>Embryophyta</taxon>
        <taxon>Tracheophyta</taxon>
        <taxon>Spermatophyta</taxon>
        <taxon>Magnoliopsida</taxon>
        <taxon>eudicotyledons</taxon>
        <taxon>Gunneridae</taxon>
        <taxon>Pentapetalae</taxon>
        <taxon>rosids</taxon>
        <taxon>malvids</taxon>
        <taxon>Brassicales</taxon>
        <taxon>Brassicaceae</taxon>
        <taxon>Camelineae</taxon>
        <taxon>Arabidopsis</taxon>
    </lineage>
</organism>
<keyword id="KW-0963">Cytoplasm</keyword>
<keyword id="KW-0479">Metal-binding</keyword>
<keyword id="KW-0539">Nucleus</keyword>
<keyword id="KW-1185">Reference proteome</keyword>
<keyword id="KW-0862">Zinc</keyword>
<keyword id="KW-0863">Zinc-finger</keyword>
<sequence>MELSSRKPYFIEEEEEENLASSLSEMEAGFSGNNNNSNNHGNPQNGVVSSSRFSYGRLNSLRNSQSYYYNQYSVSSPRSVVSGRFHDFRFDIQQPHFLDSCFLCKKPLGDNRDIYMYRGDTPFCSEECRQEQIERDEAKEKKQNLSHSVKSAMRRKEQSSPTRSRDYAFHNGTVAAA</sequence>
<name>FLZ1_ARATH</name>
<comment type="function">
    <text evidence="3">May act as an adapter to facilitate the interaction of SnRK1 complex with effector proteins, conferring tissue- and stimulus-type specific differences in the SnRK1 regulation pathway.</text>
</comment>
<comment type="subunit">
    <text evidence="3 4 6">Interacts with KIN10 and KIN11 via its FLZ-type zinc finger domain (PubMed:24600465, PubMed:29945970). Interacts with KINB1, KINB2 and KINB3 via its N-terminal part (PubMed:29945970). Interacts with DSP3 and BBX21 via its FLZ-type zinc finger domain (PubMed:24901469). Forms heterodimer with FLZ7 and FLZ15 in vitro (PubMed:29945970).</text>
</comment>
<comment type="subcellular location">
    <subcellularLocation>
        <location evidence="4">Nucleus</location>
    </subcellularLocation>
    <subcellularLocation>
        <location evidence="4">Cytoplasm</location>
    </subcellularLocation>
</comment>
<comment type="induction">
    <text evidence="5">Down-regulated in response to mild as well as prolonged energy depletion (PubMed:26442059). Up-regulated by glucose, sucrose and mannose (PubMed:26442059).</text>
</comment>
<comment type="similarity">
    <text evidence="9">Belongs to the FLZ family.</text>
</comment>
<comment type="sequence caution" evidence="9">
    <conflict type="frameshift">
        <sequence resource="EMBL" id="AK230243"/>
    </conflict>
</comment>
<evidence type="ECO:0000255" key="1">
    <source>
        <dbReference type="PROSITE-ProRule" id="PRU01131"/>
    </source>
</evidence>
<evidence type="ECO:0000256" key="2">
    <source>
        <dbReference type="SAM" id="MobiDB-lite"/>
    </source>
</evidence>
<evidence type="ECO:0000269" key="3">
    <source>
    </source>
</evidence>
<evidence type="ECO:0000269" key="4">
    <source>
    </source>
</evidence>
<evidence type="ECO:0000269" key="5">
    <source>
    </source>
</evidence>
<evidence type="ECO:0000269" key="6">
    <source>
    </source>
</evidence>
<evidence type="ECO:0000303" key="7">
    <source>
    </source>
</evidence>
<evidence type="ECO:0000303" key="8">
    <source>
    </source>
</evidence>
<evidence type="ECO:0000305" key="9"/>
<evidence type="ECO:0000312" key="10">
    <source>
        <dbReference type="Araport" id="AT5G47060"/>
    </source>
</evidence>
<evidence type="ECO:0000312" key="11">
    <source>
        <dbReference type="EMBL" id="BAB10580.1"/>
    </source>
</evidence>
<dbReference type="EMBL" id="AB025609">
    <property type="protein sequence ID" value="BAB10580.1"/>
    <property type="molecule type" value="Genomic_DNA"/>
</dbReference>
<dbReference type="EMBL" id="AB013394">
    <property type="protein sequence ID" value="BAB10580.1"/>
    <property type="status" value="JOINED"/>
    <property type="molecule type" value="Genomic_DNA"/>
</dbReference>
<dbReference type="EMBL" id="CP002688">
    <property type="protein sequence ID" value="AED95462.1"/>
    <property type="molecule type" value="Genomic_DNA"/>
</dbReference>
<dbReference type="EMBL" id="CP002688">
    <property type="protein sequence ID" value="ANM68253.1"/>
    <property type="molecule type" value="Genomic_DNA"/>
</dbReference>
<dbReference type="EMBL" id="BX841728">
    <property type="status" value="NOT_ANNOTATED_CDS"/>
    <property type="molecule type" value="mRNA"/>
</dbReference>
<dbReference type="EMBL" id="AK230243">
    <property type="status" value="NOT_ANNOTATED_CDS"/>
    <property type="molecule type" value="mRNA"/>
</dbReference>
<dbReference type="RefSeq" id="NP_001330022.1">
    <property type="nucleotide sequence ID" value="NM_001344706.1"/>
</dbReference>
<dbReference type="RefSeq" id="NP_199517.1">
    <property type="nucleotide sequence ID" value="NM_124077.5"/>
</dbReference>
<dbReference type="FunCoup" id="Q9FGQ9">
    <property type="interactions" value="730"/>
</dbReference>
<dbReference type="IntAct" id="Q9FGQ9">
    <property type="interactions" value="6"/>
</dbReference>
<dbReference type="STRING" id="3702.Q9FGQ9"/>
<dbReference type="iPTMnet" id="Q9FGQ9"/>
<dbReference type="PaxDb" id="3702-AT5G47060.1"/>
<dbReference type="ProteomicsDB" id="230107"/>
<dbReference type="EnsemblPlants" id="AT5G47060.1">
    <property type="protein sequence ID" value="AT5G47060.1"/>
    <property type="gene ID" value="AT5G47060"/>
</dbReference>
<dbReference type="EnsemblPlants" id="AT5G47060.2">
    <property type="protein sequence ID" value="AT5G47060.2"/>
    <property type="gene ID" value="AT5G47060"/>
</dbReference>
<dbReference type="GeneID" id="834752"/>
<dbReference type="Gramene" id="AT5G47060.1">
    <property type="protein sequence ID" value="AT5G47060.1"/>
    <property type="gene ID" value="AT5G47060"/>
</dbReference>
<dbReference type="Gramene" id="AT5G47060.2">
    <property type="protein sequence ID" value="AT5G47060.2"/>
    <property type="gene ID" value="AT5G47060"/>
</dbReference>
<dbReference type="KEGG" id="ath:AT5G47060"/>
<dbReference type="Araport" id="AT5G47060"/>
<dbReference type="TAIR" id="AT5G47060"/>
<dbReference type="eggNOG" id="ENOG502RZD3">
    <property type="taxonomic scope" value="Eukaryota"/>
</dbReference>
<dbReference type="HOGENOM" id="CLU_109662_0_0_1"/>
<dbReference type="InParanoid" id="Q9FGQ9"/>
<dbReference type="OMA" id="YACHNGT"/>
<dbReference type="OrthoDB" id="1916924at2759"/>
<dbReference type="PhylomeDB" id="Q9FGQ9"/>
<dbReference type="PRO" id="PR:Q9FGQ9"/>
<dbReference type="Proteomes" id="UP000006548">
    <property type="component" value="Chromosome 5"/>
</dbReference>
<dbReference type="ExpressionAtlas" id="Q9FGQ9">
    <property type="expression patterns" value="baseline and differential"/>
</dbReference>
<dbReference type="GO" id="GO:0005737">
    <property type="term" value="C:cytoplasm"/>
    <property type="evidence" value="ECO:0000314"/>
    <property type="project" value="UniProtKB"/>
</dbReference>
<dbReference type="GO" id="GO:0005634">
    <property type="term" value="C:nucleus"/>
    <property type="evidence" value="ECO:0000314"/>
    <property type="project" value="UniProtKB"/>
</dbReference>
<dbReference type="GO" id="GO:0019900">
    <property type="term" value="F:kinase binding"/>
    <property type="evidence" value="ECO:0000353"/>
    <property type="project" value="UniProtKB"/>
</dbReference>
<dbReference type="GO" id="GO:0019902">
    <property type="term" value="F:phosphatase binding"/>
    <property type="evidence" value="ECO:0000353"/>
    <property type="project" value="UniProtKB"/>
</dbReference>
<dbReference type="GO" id="GO:0008270">
    <property type="term" value="F:zinc ion binding"/>
    <property type="evidence" value="ECO:0007669"/>
    <property type="project" value="UniProtKB-KW"/>
</dbReference>
<dbReference type="GO" id="GO:0071456">
    <property type="term" value="P:cellular response to hypoxia"/>
    <property type="evidence" value="ECO:0007007"/>
    <property type="project" value="TAIR"/>
</dbReference>
<dbReference type="GO" id="GO:0009749">
    <property type="term" value="P:response to glucose"/>
    <property type="evidence" value="ECO:0000270"/>
    <property type="project" value="UniProtKB"/>
</dbReference>
<dbReference type="GO" id="GO:1905582">
    <property type="term" value="P:response to mannose"/>
    <property type="evidence" value="ECO:0000270"/>
    <property type="project" value="UniProtKB"/>
</dbReference>
<dbReference type="GO" id="GO:0042594">
    <property type="term" value="P:response to starvation"/>
    <property type="evidence" value="ECO:0000270"/>
    <property type="project" value="UniProtKB"/>
</dbReference>
<dbReference type="GO" id="GO:0009744">
    <property type="term" value="P:response to sucrose"/>
    <property type="evidence" value="ECO:0000270"/>
    <property type="project" value="UniProtKB"/>
</dbReference>
<dbReference type="InterPro" id="IPR044533">
    <property type="entry name" value="FLZ1/2/3"/>
</dbReference>
<dbReference type="InterPro" id="IPR007650">
    <property type="entry name" value="Zf-FLZ_dom"/>
</dbReference>
<dbReference type="PANTHER" id="PTHR46057:SF9">
    <property type="entry name" value="FCS-LIKE ZINC FINGER 1"/>
    <property type="match status" value="1"/>
</dbReference>
<dbReference type="PANTHER" id="PTHR46057">
    <property type="entry name" value="FCS-LIKE ZINC FINGER 1-RELATED"/>
    <property type="match status" value="1"/>
</dbReference>
<dbReference type="Pfam" id="PF04570">
    <property type="entry name" value="zf-FLZ"/>
    <property type="match status" value="1"/>
</dbReference>
<dbReference type="PROSITE" id="PS51795">
    <property type="entry name" value="ZF_FLZ"/>
    <property type="match status" value="1"/>
</dbReference>
<gene>
    <name evidence="8" type="primary">FLZ1</name>
    <name evidence="7" type="synonym">DUF581-16</name>
    <name evidence="10" type="ordered locus">At5g47060</name>
    <name evidence="11" type="ORF">MQD22.20</name>
</gene>